<organism>
    <name type="scientific">Yarrowia lipolytica (strain CLIB 122 / E 150)</name>
    <name type="common">Yeast</name>
    <name type="synonym">Candida lipolytica</name>
    <dbReference type="NCBI Taxonomy" id="284591"/>
    <lineage>
        <taxon>Eukaryota</taxon>
        <taxon>Fungi</taxon>
        <taxon>Dikarya</taxon>
        <taxon>Ascomycota</taxon>
        <taxon>Saccharomycotina</taxon>
        <taxon>Dipodascomycetes</taxon>
        <taxon>Dipodascales</taxon>
        <taxon>Dipodascales incertae sedis</taxon>
        <taxon>Yarrowia</taxon>
    </lineage>
</organism>
<dbReference type="EC" id="2.3.1.37"/>
<dbReference type="EMBL" id="CR382129">
    <property type="protein sequence ID" value="CAG81803.1"/>
    <property type="molecule type" value="Genomic_DNA"/>
</dbReference>
<dbReference type="RefSeq" id="XP_501502.1">
    <property type="nucleotide sequence ID" value="XM_501502.1"/>
</dbReference>
<dbReference type="SMR" id="Q6CCW0"/>
<dbReference type="FunCoup" id="Q6CCW0">
    <property type="interactions" value="479"/>
</dbReference>
<dbReference type="STRING" id="284591.Q6CCW0"/>
<dbReference type="EnsemblFungi" id="CAG81803">
    <property type="protein sequence ID" value="CAG81803"/>
    <property type="gene ID" value="YALI0_C06083g"/>
</dbReference>
<dbReference type="KEGG" id="yli:2909236"/>
<dbReference type="VEuPathDB" id="FungiDB:YALI0_C06083g"/>
<dbReference type="HOGENOM" id="CLU_015846_6_0_1"/>
<dbReference type="InParanoid" id="Q6CCW0"/>
<dbReference type="OMA" id="ARRCPIM"/>
<dbReference type="OrthoDB" id="116490at4891"/>
<dbReference type="UniPathway" id="UPA00251">
    <property type="reaction ID" value="UER00375"/>
</dbReference>
<dbReference type="Proteomes" id="UP000001300">
    <property type="component" value="Chromosome C"/>
</dbReference>
<dbReference type="GO" id="GO:0005759">
    <property type="term" value="C:mitochondrial matrix"/>
    <property type="evidence" value="ECO:0007669"/>
    <property type="project" value="UniProtKB-SubCell"/>
</dbReference>
<dbReference type="GO" id="GO:0005739">
    <property type="term" value="C:mitochondrion"/>
    <property type="evidence" value="ECO:0000318"/>
    <property type="project" value="GO_Central"/>
</dbReference>
<dbReference type="GO" id="GO:0003870">
    <property type="term" value="F:5-aminolevulinate synthase activity"/>
    <property type="evidence" value="ECO:0000318"/>
    <property type="project" value="GO_Central"/>
</dbReference>
<dbReference type="GO" id="GO:0030170">
    <property type="term" value="F:pyridoxal phosphate binding"/>
    <property type="evidence" value="ECO:0007669"/>
    <property type="project" value="InterPro"/>
</dbReference>
<dbReference type="GO" id="GO:0006783">
    <property type="term" value="P:heme biosynthetic process"/>
    <property type="evidence" value="ECO:0000318"/>
    <property type="project" value="GO_Central"/>
</dbReference>
<dbReference type="GO" id="GO:1902117">
    <property type="term" value="P:positive regulation of organelle assembly"/>
    <property type="evidence" value="ECO:0007669"/>
    <property type="project" value="EnsemblFungi"/>
</dbReference>
<dbReference type="GO" id="GO:0006782">
    <property type="term" value="P:protoporphyrinogen IX biosynthetic process"/>
    <property type="evidence" value="ECO:0007669"/>
    <property type="project" value="UniProtKB-UniPathway"/>
</dbReference>
<dbReference type="CDD" id="cd06454">
    <property type="entry name" value="KBL_like"/>
    <property type="match status" value="1"/>
</dbReference>
<dbReference type="FunFam" id="3.40.640.10:FF:000006">
    <property type="entry name" value="5-aminolevulinate synthase, mitochondrial"/>
    <property type="match status" value="1"/>
</dbReference>
<dbReference type="Gene3D" id="3.90.1150.10">
    <property type="entry name" value="Aspartate Aminotransferase, domain 1"/>
    <property type="match status" value="1"/>
</dbReference>
<dbReference type="Gene3D" id="3.40.640.10">
    <property type="entry name" value="Type I PLP-dependent aspartate aminotransferase-like (Major domain)"/>
    <property type="match status" value="1"/>
</dbReference>
<dbReference type="InterPro" id="IPR010961">
    <property type="entry name" value="4pyrrol_synth_NH2levulA_synth"/>
</dbReference>
<dbReference type="InterPro" id="IPR001917">
    <property type="entry name" value="Aminotrans_II_pyridoxalP_BS"/>
</dbReference>
<dbReference type="InterPro" id="IPR004839">
    <property type="entry name" value="Aminotransferase_I/II_large"/>
</dbReference>
<dbReference type="InterPro" id="IPR050087">
    <property type="entry name" value="AON_synthase_class-II"/>
</dbReference>
<dbReference type="InterPro" id="IPR015424">
    <property type="entry name" value="PyrdxlP-dep_Trfase"/>
</dbReference>
<dbReference type="InterPro" id="IPR015421">
    <property type="entry name" value="PyrdxlP-dep_Trfase_major"/>
</dbReference>
<dbReference type="InterPro" id="IPR015422">
    <property type="entry name" value="PyrdxlP-dep_Trfase_small"/>
</dbReference>
<dbReference type="NCBIfam" id="TIGR01821">
    <property type="entry name" value="5aminolev_synth"/>
    <property type="match status" value="1"/>
</dbReference>
<dbReference type="PANTHER" id="PTHR13693:SF102">
    <property type="entry name" value="2-AMINO-3-KETOBUTYRATE COENZYME A LIGASE, MITOCHONDRIAL"/>
    <property type="match status" value="1"/>
</dbReference>
<dbReference type="PANTHER" id="PTHR13693">
    <property type="entry name" value="CLASS II AMINOTRANSFERASE/8-AMINO-7-OXONONANOATE SYNTHASE"/>
    <property type="match status" value="1"/>
</dbReference>
<dbReference type="Pfam" id="PF00155">
    <property type="entry name" value="Aminotran_1_2"/>
    <property type="match status" value="1"/>
</dbReference>
<dbReference type="SUPFAM" id="SSF53383">
    <property type="entry name" value="PLP-dependent transferases"/>
    <property type="match status" value="1"/>
</dbReference>
<dbReference type="PROSITE" id="PS00599">
    <property type="entry name" value="AA_TRANSFER_CLASS_2"/>
    <property type="match status" value="1"/>
</dbReference>
<comment type="function">
    <text evidence="1">Catalyzes the synthesis of 5-aminolevulinate (ALA) from succinyl-CoA and glycine, the first and rate-limiting step in heme biosynthesis.</text>
</comment>
<comment type="catalytic activity">
    <reaction evidence="1">
        <text>succinyl-CoA + glycine + H(+) = 5-aminolevulinate + CO2 + CoA</text>
        <dbReference type="Rhea" id="RHEA:12921"/>
        <dbReference type="ChEBI" id="CHEBI:15378"/>
        <dbReference type="ChEBI" id="CHEBI:16526"/>
        <dbReference type="ChEBI" id="CHEBI:57287"/>
        <dbReference type="ChEBI" id="CHEBI:57292"/>
        <dbReference type="ChEBI" id="CHEBI:57305"/>
        <dbReference type="ChEBI" id="CHEBI:356416"/>
        <dbReference type="EC" id="2.3.1.37"/>
    </reaction>
</comment>
<comment type="cofactor">
    <cofactor evidence="1">
        <name>pyridoxal 5'-phosphate</name>
        <dbReference type="ChEBI" id="CHEBI:597326"/>
    </cofactor>
</comment>
<comment type="pathway">
    <text evidence="1">Porphyrin-containing compound metabolism; protoporphyrin-IX biosynthesis; 5-aminolevulinate from glycine: step 1/1.</text>
</comment>
<comment type="subunit">
    <text evidence="1">Homodimer.</text>
</comment>
<comment type="subcellular location">
    <subcellularLocation>
        <location evidence="1">Mitochondrion matrix</location>
    </subcellularLocation>
</comment>
<comment type="similarity">
    <text evidence="4">Belongs to the class-II pyridoxal-phosphate-dependent aminotransferase family.</text>
</comment>
<protein>
    <recommendedName>
        <fullName>5-aminolevulinate synthase, mitochondrial</fullName>
        <ecNumber>2.3.1.37</ecNumber>
    </recommendedName>
    <alternativeName>
        <fullName>5-aminolevulinic acid synthase</fullName>
    </alternativeName>
    <alternativeName>
        <fullName>Delta-ALA synthase</fullName>
    </alternativeName>
    <alternativeName>
        <fullName>Delta-aminolevulinate synthase</fullName>
    </alternativeName>
</protein>
<evidence type="ECO:0000250" key="1">
    <source>
        <dbReference type="UniProtKB" id="P09950"/>
    </source>
</evidence>
<evidence type="ECO:0000250" key="2">
    <source>
        <dbReference type="UniProtKB" id="P18079"/>
    </source>
</evidence>
<evidence type="ECO:0000255" key="3"/>
<evidence type="ECO:0000305" key="4"/>
<reference key="1">
    <citation type="journal article" date="2004" name="Nature">
        <title>Genome evolution in yeasts.</title>
        <authorList>
            <person name="Dujon B."/>
            <person name="Sherman D."/>
            <person name="Fischer G."/>
            <person name="Durrens P."/>
            <person name="Casaregola S."/>
            <person name="Lafontaine I."/>
            <person name="de Montigny J."/>
            <person name="Marck C."/>
            <person name="Neuveglise C."/>
            <person name="Talla E."/>
            <person name="Goffard N."/>
            <person name="Frangeul L."/>
            <person name="Aigle M."/>
            <person name="Anthouard V."/>
            <person name="Babour A."/>
            <person name="Barbe V."/>
            <person name="Barnay S."/>
            <person name="Blanchin S."/>
            <person name="Beckerich J.-M."/>
            <person name="Beyne E."/>
            <person name="Bleykasten C."/>
            <person name="Boisrame A."/>
            <person name="Boyer J."/>
            <person name="Cattolico L."/>
            <person name="Confanioleri F."/>
            <person name="de Daruvar A."/>
            <person name="Despons L."/>
            <person name="Fabre E."/>
            <person name="Fairhead C."/>
            <person name="Ferry-Dumazet H."/>
            <person name="Groppi A."/>
            <person name="Hantraye F."/>
            <person name="Hennequin C."/>
            <person name="Jauniaux N."/>
            <person name="Joyet P."/>
            <person name="Kachouri R."/>
            <person name="Kerrest A."/>
            <person name="Koszul R."/>
            <person name="Lemaire M."/>
            <person name="Lesur I."/>
            <person name="Ma L."/>
            <person name="Muller H."/>
            <person name="Nicaud J.-M."/>
            <person name="Nikolski M."/>
            <person name="Oztas S."/>
            <person name="Ozier-Kalogeropoulos O."/>
            <person name="Pellenz S."/>
            <person name="Potier S."/>
            <person name="Richard G.-F."/>
            <person name="Straub M.-L."/>
            <person name="Suleau A."/>
            <person name="Swennen D."/>
            <person name="Tekaia F."/>
            <person name="Wesolowski-Louvel M."/>
            <person name="Westhof E."/>
            <person name="Wirth B."/>
            <person name="Zeniou-Meyer M."/>
            <person name="Zivanovic Y."/>
            <person name="Bolotin-Fukuhara M."/>
            <person name="Thierry A."/>
            <person name="Bouchier C."/>
            <person name="Caudron B."/>
            <person name="Scarpelli C."/>
            <person name="Gaillardin C."/>
            <person name="Weissenbach J."/>
            <person name="Wincker P."/>
            <person name="Souciet J.-L."/>
        </authorList>
    </citation>
    <scope>NUCLEOTIDE SEQUENCE [LARGE SCALE GENOMIC DNA]</scope>
    <source>
        <strain>CLIB 122 / E 150</strain>
    </source>
</reference>
<name>HEM1_YARLI</name>
<keyword id="KW-0012">Acyltransferase</keyword>
<keyword id="KW-0350">Heme biosynthesis</keyword>
<keyword id="KW-0496">Mitochondrion</keyword>
<keyword id="KW-0663">Pyridoxal phosphate</keyword>
<keyword id="KW-1185">Reference proteome</keyword>
<keyword id="KW-0808">Transferase</keyword>
<keyword id="KW-0809">Transit peptide</keyword>
<accession>Q6CCW0</accession>
<proteinExistence type="inferred from homology"/>
<feature type="transit peptide" description="Mitochondrion" evidence="3">
    <location>
        <begin position="1"/>
        <end position="18"/>
    </location>
</feature>
<feature type="chain" id="PRO_0000001244" description="5-aminolevulinate synthase, mitochondrial">
    <location>
        <begin position="19"/>
        <end position="563"/>
    </location>
</feature>
<feature type="active site" evidence="2">
    <location>
        <position position="376"/>
    </location>
</feature>
<feature type="binding site" evidence="2">
    <location>
        <position position="137"/>
    </location>
    <ligand>
        <name>substrate</name>
    </ligand>
</feature>
<feature type="binding site" evidence="2">
    <location>
        <position position="251"/>
    </location>
    <ligand>
        <name>substrate</name>
    </ligand>
</feature>
<feature type="binding site" evidence="2">
    <location>
        <position position="270"/>
    </location>
    <ligand>
        <name>substrate</name>
    </ligand>
</feature>
<feature type="binding site" description="in other chain" evidence="2">
    <location>
        <position position="303"/>
    </location>
    <ligand>
        <name>pyridoxal 5'-phosphate</name>
        <dbReference type="ChEBI" id="CHEBI:597326"/>
        <note>ligand shared between dimeric partners</note>
    </ligand>
</feature>
<feature type="binding site" description="in other chain" evidence="2">
    <location>
        <position position="331"/>
    </location>
    <ligand>
        <name>pyridoxal 5'-phosphate</name>
        <dbReference type="ChEBI" id="CHEBI:597326"/>
        <note>ligand shared between dimeric partners</note>
    </ligand>
</feature>
<feature type="binding site" description="in other chain" evidence="2">
    <location>
        <position position="373"/>
    </location>
    <ligand>
        <name>pyridoxal 5'-phosphate</name>
        <dbReference type="ChEBI" id="CHEBI:597326"/>
        <note>ligand shared between dimeric partners</note>
    </ligand>
</feature>
<feature type="binding site" evidence="2">
    <location>
        <position position="405"/>
    </location>
    <ligand>
        <name>pyridoxal 5'-phosphate</name>
        <dbReference type="ChEBI" id="CHEBI:597326"/>
        <note>ligand shared between dimeric partners</note>
    </ligand>
</feature>
<feature type="binding site" evidence="2">
    <location>
        <position position="406"/>
    </location>
    <ligand>
        <name>pyridoxal 5'-phosphate</name>
        <dbReference type="ChEBI" id="CHEBI:597326"/>
        <note>ligand shared between dimeric partners</note>
    </ligand>
</feature>
<feature type="binding site" evidence="2">
    <location>
        <position position="491"/>
    </location>
    <ligand>
        <name>substrate</name>
    </ligand>
</feature>
<feature type="modified residue" description="N6-(pyridoxal phosphate)lysine" evidence="2">
    <location>
        <position position="376"/>
    </location>
</feature>
<sequence length="563" mass="61237">MESLVRQSKKLCPYIGRTSASSLKQLGNGRLTQKAGQCPIMGKAMGVRGFKSDAGSNAESATVDVHAAVDTSKGTCPHAAQYSPVYPSSRLDNYPFGMTQRGLGKVPTQDAHNATTFNYESFYENKINAKHQDKSYRYFNNINRLAAEFPRAHRGSIEEDKVTVWCANDYLGMGRNPVVVDAMHETLDKYGAGAGGTRNIAGHNRHAVELEAAIADLHKKEAALVFSSCYVANDSTLSLLGQALPNCVYFSDASNHASMIHGIRHGGSEKVVWKHNDLADLEAKLARYPKSTPKVIAFESVYSMCGSIGPIEEICDLADKYGAITFLDEVHAVGMYGPTGAGVAEHLDFEHYHSGAQTQRQPIMDRVDIFTGTLGKAYGCVGGYIAGSAKFVDMVRSYAPGFIFTTTLPPATMAGARAAINYQKATMKDRVAQQTHTRYVKDKLANRGIPVVPNPSHIVPVLVGDAQKAKAASDLLLTKHQIYVQAINFPTVPIGQERLRVTPTPGHHEGLCDELVAALEDVWQELDLKRVEDWTAEGGLCGVGEGVEVEPLWSEEQLSYGRD</sequence>
<gene>
    <name type="primary">HEM1</name>
    <name type="ordered locus">YALI0C06083g</name>
</gene>